<gene>
    <name evidence="1" type="primary">rplK</name>
    <name type="ordered locus">Kole_1842</name>
</gene>
<dbReference type="EMBL" id="CP001634">
    <property type="protein sequence ID" value="ACR80524.1"/>
    <property type="molecule type" value="Genomic_DNA"/>
</dbReference>
<dbReference type="RefSeq" id="WP_015869167.1">
    <property type="nucleotide sequence ID" value="NC_012785.1"/>
</dbReference>
<dbReference type="SMR" id="C5CGE3"/>
<dbReference type="STRING" id="521045.Kole_1842"/>
<dbReference type="KEGG" id="kol:Kole_1842"/>
<dbReference type="eggNOG" id="COG0080">
    <property type="taxonomic scope" value="Bacteria"/>
</dbReference>
<dbReference type="HOGENOM" id="CLU_074237_2_1_0"/>
<dbReference type="OrthoDB" id="9802408at2"/>
<dbReference type="Proteomes" id="UP000002382">
    <property type="component" value="Chromosome"/>
</dbReference>
<dbReference type="GO" id="GO:0022625">
    <property type="term" value="C:cytosolic large ribosomal subunit"/>
    <property type="evidence" value="ECO:0007669"/>
    <property type="project" value="TreeGrafter"/>
</dbReference>
<dbReference type="GO" id="GO:0070180">
    <property type="term" value="F:large ribosomal subunit rRNA binding"/>
    <property type="evidence" value="ECO:0007669"/>
    <property type="project" value="UniProtKB-UniRule"/>
</dbReference>
<dbReference type="GO" id="GO:0003735">
    <property type="term" value="F:structural constituent of ribosome"/>
    <property type="evidence" value="ECO:0007669"/>
    <property type="project" value="InterPro"/>
</dbReference>
<dbReference type="GO" id="GO:0006412">
    <property type="term" value="P:translation"/>
    <property type="evidence" value="ECO:0007669"/>
    <property type="project" value="UniProtKB-UniRule"/>
</dbReference>
<dbReference type="CDD" id="cd00349">
    <property type="entry name" value="Ribosomal_L11"/>
    <property type="match status" value="1"/>
</dbReference>
<dbReference type="FunFam" id="1.10.10.250:FF:000001">
    <property type="entry name" value="50S ribosomal protein L11"/>
    <property type="match status" value="1"/>
</dbReference>
<dbReference type="FunFam" id="3.30.1550.10:FF:000001">
    <property type="entry name" value="50S ribosomal protein L11"/>
    <property type="match status" value="1"/>
</dbReference>
<dbReference type="Gene3D" id="1.10.10.250">
    <property type="entry name" value="Ribosomal protein L11, C-terminal domain"/>
    <property type="match status" value="1"/>
</dbReference>
<dbReference type="Gene3D" id="3.30.1550.10">
    <property type="entry name" value="Ribosomal protein L11/L12, N-terminal domain"/>
    <property type="match status" value="1"/>
</dbReference>
<dbReference type="HAMAP" id="MF_00736">
    <property type="entry name" value="Ribosomal_uL11"/>
    <property type="match status" value="1"/>
</dbReference>
<dbReference type="InterPro" id="IPR000911">
    <property type="entry name" value="Ribosomal_uL11"/>
</dbReference>
<dbReference type="InterPro" id="IPR006519">
    <property type="entry name" value="Ribosomal_uL11_bac-typ"/>
</dbReference>
<dbReference type="InterPro" id="IPR020783">
    <property type="entry name" value="Ribosomal_uL11_C"/>
</dbReference>
<dbReference type="InterPro" id="IPR036769">
    <property type="entry name" value="Ribosomal_uL11_C_sf"/>
</dbReference>
<dbReference type="InterPro" id="IPR020785">
    <property type="entry name" value="Ribosomal_uL11_CS"/>
</dbReference>
<dbReference type="InterPro" id="IPR020784">
    <property type="entry name" value="Ribosomal_uL11_N"/>
</dbReference>
<dbReference type="InterPro" id="IPR036796">
    <property type="entry name" value="Ribosomal_uL11_N_sf"/>
</dbReference>
<dbReference type="NCBIfam" id="TIGR01632">
    <property type="entry name" value="L11_bact"/>
    <property type="match status" value="1"/>
</dbReference>
<dbReference type="PANTHER" id="PTHR11661">
    <property type="entry name" value="60S RIBOSOMAL PROTEIN L12"/>
    <property type="match status" value="1"/>
</dbReference>
<dbReference type="PANTHER" id="PTHR11661:SF1">
    <property type="entry name" value="LARGE RIBOSOMAL SUBUNIT PROTEIN UL11M"/>
    <property type="match status" value="1"/>
</dbReference>
<dbReference type="Pfam" id="PF00298">
    <property type="entry name" value="Ribosomal_L11"/>
    <property type="match status" value="1"/>
</dbReference>
<dbReference type="Pfam" id="PF03946">
    <property type="entry name" value="Ribosomal_L11_N"/>
    <property type="match status" value="1"/>
</dbReference>
<dbReference type="SMART" id="SM00649">
    <property type="entry name" value="RL11"/>
    <property type="match status" value="1"/>
</dbReference>
<dbReference type="SUPFAM" id="SSF54747">
    <property type="entry name" value="Ribosomal L11/L12e N-terminal domain"/>
    <property type="match status" value="1"/>
</dbReference>
<dbReference type="SUPFAM" id="SSF46906">
    <property type="entry name" value="Ribosomal protein L11, C-terminal domain"/>
    <property type="match status" value="1"/>
</dbReference>
<dbReference type="PROSITE" id="PS00359">
    <property type="entry name" value="RIBOSOMAL_L11"/>
    <property type="match status" value="1"/>
</dbReference>
<organism>
    <name type="scientific">Kosmotoga olearia (strain ATCC BAA-1733 / DSM 21960 / TBF 19.5.1)</name>
    <dbReference type="NCBI Taxonomy" id="521045"/>
    <lineage>
        <taxon>Bacteria</taxon>
        <taxon>Thermotogati</taxon>
        <taxon>Thermotogota</taxon>
        <taxon>Thermotogae</taxon>
        <taxon>Kosmotogales</taxon>
        <taxon>Kosmotogaceae</taxon>
        <taxon>Kosmotoga</taxon>
    </lineage>
</organism>
<reference key="1">
    <citation type="submission" date="2009-06" db="EMBL/GenBank/DDBJ databases">
        <title>Complete sequence of Thermotogales bacterium TBF 19.5.1.</title>
        <authorList>
            <consortium name="US DOE Joint Genome Institute"/>
            <person name="Lucas S."/>
            <person name="Copeland A."/>
            <person name="Lapidus A."/>
            <person name="Glavina del Rio T."/>
            <person name="Tice H."/>
            <person name="Bruce D."/>
            <person name="Goodwin L."/>
            <person name="Pitluck S."/>
            <person name="Chertkov O."/>
            <person name="Brettin T."/>
            <person name="Detter J.C."/>
            <person name="Han C."/>
            <person name="Schmutz J."/>
            <person name="Larimer F."/>
            <person name="Land M."/>
            <person name="Hauser L."/>
            <person name="Kyrpides N."/>
            <person name="Ovchinnikova G."/>
            <person name="Noll K."/>
        </authorList>
    </citation>
    <scope>NUCLEOTIDE SEQUENCE [LARGE SCALE GENOMIC DNA]</scope>
    <source>
        <strain>ATCC BAA-1733 / DSM 21960 / TBF 19.5.1</strain>
    </source>
</reference>
<name>RL11_KOSOT</name>
<feature type="chain" id="PRO_1000212779" description="Large ribosomal subunit protein uL11">
    <location>
        <begin position="1"/>
        <end position="141"/>
    </location>
</feature>
<sequence length="141" mass="15031">MAKKIIAKIKLQLEAGKATPAPPVGPALGQHGVNIMDFCKKFNAVTADKPGMVFPAVITVYADRSFTFELKTPPASFLILKAAGIKKGSGEPNKVKVGKITKAQVEEIAKIKMPDLNARTLEAAMKIIEGTARNMGVEVVD</sequence>
<comment type="function">
    <text evidence="1">Forms part of the ribosomal stalk which helps the ribosome interact with GTP-bound translation factors.</text>
</comment>
<comment type="subunit">
    <text evidence="1">Part of the ribosomal stalk of the 50S ribosomal subunit. Interacts with L10 and the large rRNA to form the base of the stalk. L10 forms an elongated spine to which L12 dimers bind in a sequential fashion forming a multimeric L10(L12)X complex.</text>
</comment>
<comment type="PTM">
    <text evidence="1">One or more lysine residues are methylated.</text>
</comment>
<comment type="similarity">
    <text evidence="1">Belongs to the universal ribosomal protein uL11 family.</text>
</comment>
<proteinExistence type="inferred from homology"/>
<accession>C5CGE3</accession>
<protein>
    <recommendedName>
        <fullName evidence="1">Large ribosomal subunit protein uL11</fullName>
    </recommendedName>
    <alternativeName>
        <fullName evidence="2">50S ribosomal protein L11</fullName>
    </alternativeName>
</protein>
<evidence type="ECO:0000255" key="1">
    <source>
        <dbReference type="HAMAP-Rule" id="MF_00736"/>
    </source>
</evidence>
<evidence type="ECO:0000305" key="2"/>
<keyword id="KW-0488">Methylation</keyword>
<keyword id="KW-1185">Reference proteome</keyword>
<keyword id="KW-0687">Ribonucleoprotein</keyword>
<keyword id="KW-0689">Ribosomal protein</keyword>
<keyword id="KW-0694">RNA-binding</keyword>
<keyword id="KW-0699">rRNA-binding</keyword>